<name>PA2B2_LACMU</name>
<evidence type="ECO:0000250" key="1"/>
<evidence type="ECO:0000255" key="2">
    <source>
        <dbReference type="PROSITE-ProRule" id="PRU10035"/>
    </source>
</evidence>
<evidence type="ECO:0000255" key="3">
    <source>
        <dbReference type="PROSITE-ProRule" id="PRU10036"/>
    </source>
</evidence>
<evidence type="ECO:0000269" key="4">
    <source>
    </source>
</evidence>
<evidence type="ECO:0000305" key="5"/>
<reference key="1">
    <citation type="journal article" date="2005" name="Biochim. Biophys. Acta">
        <title>Biochemical and enzymatic characterization of two basic Asp49 phospholipase A2 isoforms from Lachesis muta muta (Surucucu) venom.</title>
        <authorList>
            <person name="Damico D.C.S."/>
            <person name="Lilla S."/>
            <person name="de Nucci G."/>
            <person name="Ponce-Soto L.A."/>
            <person name="Winck F.V."/>
            <person name="Novello J.C."/>
            <person name="Marangoni S."/>
        </authorList>
    </citation>
    <scope>PROTEIN SEQUENCE</scope>
    <scope>MASS SPECTROMETRY</scope>
    <scope>SUBUNIT</scope>
    <source>
        <tissue>Venom</tissue>
    </source>
</reference>
<accession>P0C943</accession>
<organism>
    <name type="scientific">Lachesis muta muta</name>
    <name type="common">Bushmaster</name>
    <dbReference type="NCBI Taxonomy" id="8753"/>
    <lineage>
        <taxon>Eukaryota</taxon>
        <taxon>Metazoa</taxon>
        <taxon>Chordata</taxon>
        <taxon>Craniata</taxon>
        <taxon>Vertebrata</taxon>
        <taxon>Euteleostomi</taxon>
        <taxon>Lepidosauria</taxon>
        <taxon>Squamata</taxon>
        <taxon>Bifurcata</taxon>
        <taxon>Unidentata</taxon>
        <taxon>Episquamata</taxon>
        <taxon>Toxicofera</taxon>
        <taxon>Serpentes</taxon>
        <taxon>Colubroidea</taxon>
        <taxon>Viperidae</taxon>
        <taxon>Crotalinae</taxon>
        <taxon>Lachesis</taxon>
    </lineage>
</organism>
<keyword id="KW-0106">Calcium</keyword>
<keyword id="KW-0903">Direct protein sequencing</keyword>
<keyword id="KW-1015">Disulfide bond</keyword>
<keyword id="KW-0378">Hydrolase</keyword>
<keyword id="KW-0442">Lipid degradation</keyword>
<keyword id="KW-0443">Lipid metabolism</keyword>
<keyword id="KW-0479">Metal-binding</keyword>
<keyword id="KW-0959">Myotoxin</keyword>
<keyword id="KW-0528">Neurotoxin</keyword>
<keyword id="KW-0638">Presynaptic neurotoxin</keyword>
<keyword id="KW-0964">Secreted</keyword>
<keyword id="KW-0800">Toxin</keyword>
<proteinExistence type="evidence at protein level"/>
<protein>
    <recommendedName>
        <fullName>Basic phospholipase A2 LmTX-II</fullName>
        <shortName>svPLA2</shortName>
        <ecNumber>3.1.1.4</ecNumber>
    </recommendedName>
    <alternativeName>
        <fullName>Phosphatidylcholine 2-acylhydrolase</fullName>
    </alternativeName>
</protein>
<sequence>HLLKFNKMIKFETRKNAIPFYAFYGCYCGWGGRXXXXXXXXXCCFVHDCCYGKXXXXXXXWDLYPYXXXSGYLTCGKGTWCEEQICECDRVAAECLRRSLSTYKYGYMFYPDSRCRGPSETC</sequence>
<dbReference type="EC" id="3.1.1.4"/>
<dbReference type="Allergome" id="6323">
    <property type="allergen name" value="Lac mu 1"/>
</dbReference>
<dbReference type="GO" id="GO:0005576">
    <property type="term" value="C:extracellular region"/>
    <property type="evidence" value="ECO:0007669"/>
    <property type="project" value="UniProtKB-SubCell"/>
</dbReference>
<dbReference type="GO" id="GO:0005509">
    <property type="term" value="F:calcium ion binding"/>
    <property type="evidence" value="ECO:0007669"/>
    <property type="project" value="InterPro"/>
</dbReference>
<dbReference type="GO" id="GO:0047498">
    <property type="term" value="F:calcium-dependent phospholipase A2 activity"/>
    <property type="evidence" value="ECO:0007669"/>
    <property type="project" value="TreeGrafter"/>
</dbReference>
<dbReference type="GO" id="GO:0005543">
    <property type="term" value="F:phospholipid binding"/>
    <property type="evidence" value="ECO:0007669"/>
    <property type="project" value="TreeGrafter"/>
</dbReference>
<dbReference type="GO" id="GO:0090729">
    <property type="term" value="F:toxin activity"/>
    <property type="evidence" value="ECO:0007669"/>
    <property type="project" value="UniProtKB-KW"/>
</dbReference>
<dbReference type="GO" id="GO:0050482">
    <property type="term" value="P:arachidonate secretion"/>
    <property type="evidence" value="ECO:0007669"/>
    <property type="project" value="InterPro"/>
</dbReference>
<dbReference type="GO" id="GO:0016042">
    <property type="term" value="P:lipid catabolic process"/>
    <property type="evidence" value="ECO:0007669"/>
    <property type="project" value="UniProtKB-KW"/>
</dbReference>
<dbReference type="GO" id="GO:0042130">
    <property type="term" value="P:negative regulation of T cell proliferation"/>
    <property type="evidence" value="ECO:0007669"/>
    <property type="project" value="TreeGrafter"/>
</dbReference>
<dbReference type="GO" id="GO:0006644">
    <property type="term" value="P:phospholipid metabolic process"/>
    <property type="evidence" value="ECO:0007669"/>
    <property type="project" value="InterPro"/>
</dbReference>
<dbReference type="CDD" id="cd00125">
    <property type="entry name" value="PLA2c"/>
    <property type="match status" value="1"/>
</dbReference>
<dbReference type="FunFam" id="1.20.90.10:FF:000001">
    <property type="entry name" value="Basic phospholipase A2 homolog"/>
    <property type="match status" value="1"/>
</dbReference>
<dbReference type="Gene3D" id="1.20.90.10">
    <property type="entry name" value="Phospholipase A2 domain"/>
    <property type="match status" value="1"/>
</dbReference>
<dbReference type="InterPro" id="IPR001211">
    <property type="entry name" value="PLipase_A2"/>
</dbReference>
<dbReference type="InterPro" id="IPR033112">
    <property type="entry name" value="PLipase_A2_Asp_AS"/>
</dbReference>
<dbReference type="InterPro" id="IPR016090">
    <property type="entry name" value="PLipase_A2_dom"/>
</dbReference>
<dbReference type="InterPro" id="IPR036444">
    <property type="entry name" value="PLipase_A2_dom_sf"/>
</dbReference>
<dbReference type="InterPro" id="IPR033113">
    <property type="entry name" value="PLipase_A2_His_AS"/>
</dbReference>
<dbReference type="PANTHER" id="PTHR11716">
    <property type="entry name" value="PHOSPHOLIPASE A2 FAMILY MEMBER"/>
    <property type="match status" value="1"/>
</dbReference>
<dbReference type="PANTHER" id="PTHR11716:SF9">
    <property type="entry name" value="PHOSPHOLIPASE A2, MEMBRANE ASSOCIATED"/>
    <property type="match status" value="1"/>
</dbReference>
<dbReference type="Pfam" id="PF00068">
    <property type="entry name" value="Phospholip_A2_1"/>
    <property type="match status" value="1"/>
</dbReference>
<dbReference type="PRINTS" id="PR00389">
    <property type="entry name" value="PHPHLIPASEA2"/>
</dbReference>
<dbReference type="SMART" id="SM00085">
    <property type="entry name" value="PA2c"/>
    <property type="match status" value="1"/>
</dbReference>
<dbReference type="SUPFAM" id="SSF48619">
    <property type="entry name" value="Phospholipase A2, PLA2"/>
    <property type="match status" value="1"/>
</dbReference>
<dbReference type="PROSITE" id="PS00119">
    <property type="entry name" value="PA2_ASP"/>
    <property type="match status" value="1"/>
</dbReference>
<dbReference type="PROSITE" id="PS00118">
    <property type="entry name" value="PA2_HIS"/>
    <property type="match status" value="1"/>
</dbReference>
<feature type="chain" id="PRO_0000371714" description="Basic phospholipase A2 LmTX-II">
    <location>
        <begin position="1"/>
        <end position="122"/>
    </location>
</feature>
<feature type="active site" evidence="1">
    <location>
        <position position="47"/>
    </location>
</feature>
<feature type="active site" evidence="1">
    <location>
        <position position="89"/>
    </location>
</feature>
<feature type="binding site" evidence="1">
    <location>
        <position position="27"/>
    </location>
    <ligand>
        <name>Ca(2+)</name>
        <dbReference type="ChEBI" id="CHEBI:29108"/>
    </ligand>
</feature>
<feature type="binding site" evidence="1">
    <location>
        <position position="29"/>
    </location>
    <ligand>
        <name>Ca(2+)</name>
        <dbReference type="ChEBI" id="CHEBI:29108"/>
    </ligand>
</feature>
<feature type="binding site" evidence="1">
    <location>
        <position position="31"/>
    </location>
    <ligand>
        <name>Ca(2+)</name>
        <dbReference type="ChEBI" id="CHEBI:29108"/>
    </ligand>
</feature>
<feature type="binding site" evidence="1">
    <location>
        <position position="48"/>
    </location>
    <ligand>
        <name>Ca(2+)</name>
        <dbReference type="ChEBI" id="CHEBI:29108"/>
    </ligand>
</feature>
<feature type="disulfide bond" evidence="1">
    <location>
        <begin position="26"/>
        <end position="115"/>
    </location>
</feature>
<feature type="disulfide bond" evidence="1">
    <location>
        <begin position="28"/>
        <end position="44"/>
    </location>
</feature>
<feature type="disulfide bond" evidence="1">
    <location>
        <begin position="43"/>
        <end position="95"/>
    </location>
</feature>
<feature type="disulfide bond" evidence="1">
    <location>
        <begin position="49"/>
        <end position="122"/>
    </location>
</feature>
<feature type="disulfide bond" evidence="1">
    <location>
        <begin position="50"/>
        <end position="88"/>
    </location>
</feature>
<feature type="disulfide bond" evidence="1">
    <location>
        <begin position="75"/>
        <end position="86"/>
    </location>
</feature>
<feature type="unsure residue" description="L or I">
    <location>
        <position position="2"/>
    </location>
</feature>
<feature type="unsure residue" description="L or I">
    <location>
        <position position="3"/>
    </location>
</feature>
<feature type="unsure residue" description="K or Q">
    <location>
        <position position="4"/>
    </location>
</feature>
<feature type="unsure residue" description="I or L">
    <location>
        <position position="9"/>
    </location>
</feature>
<feature type="unsure residue" description="I or L">
    <location>
        <position position="18"/>
    </location>
</feature>
<feature type="unsure residue" description="L or I">
    <location>
        <position position="63"/>
    </location>
</feature>
<feature type="unsure residue" description="L or I">
    <location>
        <position position="73"/>
    </location>
</feature>
<feature type="unsure residue" description="Q or K">
    <location>
        <position position="84"/>
    </location>
</feature>
<feature type="unsure residue" description="I or L">
    <location>
        <position position="85"/>
    </location>
</feature>
<feature type="unsure residue" description="L or I">
    <location>
        <position position="96"/>
    </location>
</feature>
<feature type="unsure residue" description="L or I">
    <location>
        <position position="100"/>
    </location>
</feature>
<comment type="function">
    <text>Snake venom phospholipase A2 (PLA2) that may display neurotoxic and myotoxic activities. May induce inflammatory edema by mechanisms involving mast cell activation and arachidonic acid metabolites. May increase plasma creatine kinase activity. PLA2 catalyzes the calcium-dependent hydrolysis of the 2-acyl groups in 3-sn-phosphoglycerides.</text>
</comment>
<comment type="catalytic activity">
    <reaction evidence="2 3">
        <text>a 1,2-diacyl-sn-glycero-3-phosphocholine + H2O = a 1-acyl-sn-glycero-3-phosphocholine + a fatty acid + H(+)</text>
        <dbReference type="Rhea" id="RHEA:15801"/>
        <dbReference type="ChEBI" id="CHEBI:15377"/>
        <dbReference type="ChEBI" id="CHEBI:15378"/>
        <dbReference type="ChEBI" id="CHEBI:28868"/>
        <dbReference type="ChEBI" id="CHEBI:57643"/>
        <dbReference type="ChEBI" id="CHEBI:58168"/>
        <dbReference type="EC" id="3.1.1.4"/>
    </reaction>
</comment>
<comment type="cofactor">
    <cofactor evidence="1">
        <name>Ca(2+)</name>
        <dbReference type="ChEBI" id="CHEBI:29108"/>
    </cofactor>
    <text evidence="1">Binds 1 Ca(2+) ion.</text>
</comment>
<comment type="subunit">
    <text evidence="1">Monomer.</text>
</comment>
<comment type="subcellular location">
    <subcellularLocation>
        <location>Secreted</location>
    </subcellularLocation>
</comment>
<comment type="tissue specificity">
    <text>Expressed by the venom gland.</text>
</comment>
<comment type="mass spectrometry"/>
<comment type="similarity">
    <text evidence="5">Belongs to the phospholipase A2 family. Group II subfamily. D49 sub-subfamily.</text>
</comment>